<comment type="function">
    <text evidence="1">Catalyzes the anti-1,4-elimination of the C-3 phosphate and the C-6 proR hydrogen from 5-enolpyruvylshikimate-3-phosphate (EPSP) to yield chorismate, which is the branch point compound that serves as the starting substrate for the three terminal pathways of aromatic amino acid biosynthesis. This reaction introduces a second double bond into the aromatic ring system.</text>
</comment>
<comment type="catalytic activity">
    <reaction evidence="1">
        <text>5-O-(1-carboxyvinyl)-3-phosphoshikimate = chorismate + phosphate</text>
        <dbReference type="Rhea" id="RHEA:21020"/>
        <dbReference type="ChEBI" id="CHEBI:29748"/>
        <dbReference type="ChEBI" id="CHEBI:43474"/>
        <dbReference type="ChEBI" id="CHEBI:57701"/>
        <dbReference type="EC" id="4.2.3.5"/>
    </reaction>
</comment>
<comment type="cofactor">
    <cofactor evidence="1">
        <name>FMNH2</name>
        <dbReference type="ChEBI" id="CHEBI:57618"/>
    </cofactor>
    <text evidence="1">Reduced FMN (FMNH(2)).</text>
</comment>
<comment type="pathway">
    <text evidence="1">Metabolic intermediate biosynthesis; chorismate biosynthesis; chorismate from D-erythrose 4-phosphate and phosphoenolpyruvate: step 7/7.</text>
</comment>
<comment type="subunit">
    <text evidence="1">Homotetramer.</text>
</comment>
<comment type="similarity">
    <text evidence="1">Belongs to the chorismate synthase family.</text>
</comment>
<accession>B4SZQ7</accession>
<keyword id="KW-0028">Amino-acid biosynthesis</keyword>
<keyword id="KW-0057">Aromatic amino acid biosynthesis</keyword>
<keyword id="KW-0274">FAD</keyword>
<keyword id="KW-0285">Flavoprotein</keyword>
<keyword id="KW-0288">FMN</keyword>
<keyword id="KW-0456">Lyase</keyword>
<keyword id="KW-0521">NADP</keyword>
<name>AROC_SALNS</name>
<sequence length="361" mass="39109">MAGNTIGQLFRVTTFGESHGLALGCIVDGVPPGIPLTEADLQHDLDRRRPGTSRYTTQRREPDQVKILSGVFDGVTTGTSIGLLIENTDQRSQDYSAIKDVFRPGHADYTYEQKYGLRDYRGGGRSSARETAMRVAAGAIAKKYLAEKFGIEIRGCLTQMGDIPLEIKDWRQVELNPFFCPDADKLDALDELMRALKKEGDSIGAKVTVMASGVPAGLGEPVFDRLDADIAHALMSINAVKGVEIGEGFNVVALRGSQNRDEITAQGFQSNHAGGILGGISSGQHIVAHMALKPTSSITVPGRTINRAGEEVEMITKGRHDPCVGIRAVPIAEAMLAIVLMDHLLRHRAQNADVKTEIPRW</sequence>
<reference key="1">
    <citation type="journal article" date="2011" name="J. Bacteriol.">
        <title>Comparative genomics of 28 Salmonella enterica isolates: evidence for CRISPR-mediated adaptive sublineage evolution.</title>
        <authorList>
            <person name="Fricke W.F."/>
            <person name="Mammel M.K."/>
            <person name="McDermott P.F."/>
            <person name="Tartera C."/>
            <person name="White D.G."/>
            <person name="Leclerc J.E."/>
            <person name="Ravel J."/>
            <person name="Cebula T.A."/>
        </authorList>
    </citation>
    <scope>NUCLEOTIDE SEQUENCE [LARGE SCALE GENOMIC DNA]</scope>
    <source>
        <strain>SL254</strain>
    </source>
</reference>
<feature type="chain" id="PRO_1000115396" description="Chorismate synthase">
    <location>
        <begin position="1"/>
        <end position="361"/>
    </location>
</feature>
<feature type="binding site" evidence="1">
    <location>
        <position position="48"/>
    </location>
    <ligand>
        <name>NADP(+)</name>
        <dbReference type="ChEBI" id="CHEBI:58349"/>
    </ligand>
</feature>
<feature type="binding site" evidence="1">
    <location>
        <position position="54"/>
    </location>
    <ligand>
        <name>NADP(+)</name>
        <dbReference type="ChEBI" id="CHEBI:58349"/>
    </ligand>
</feature>
<feature type="binding site" evidence="1">
    <location>
        <begin position="125"/>
        <end position="127"/>
    </location>
    <ligand>
        <name>FMN</name>
        <dbReference type="ChEBI" id="CHEBI:58210"/>
    </ligand>
</feature>
<feature type="binding site" evidence="1">
    <location>
        <begin position="238"/>
        <end position="239"/>
    </location>
    <ligand>
        <name>FMN</name>
        <dbReference type="ChEBI" id="CHEBI:58210"/>
    </ligand>
</feature>
<feature type="binding site" evidence="1">
    <location>
        <position position="278"/>
    </location>
    <ligand>
        <name>FMN</name>
        <dbReference type="ChEBI" id="CHEBI:58210"/>
    </ligand>
</feature>
<feature type="binding site" evidence="1">
    <location>
        <begin position="293"/>
        <end position="297"/>
    </location>
    <ligand>
        <name>FMN</name>
        <dbReference type="ChEBI" id="CHEBI:58210"/>
    </ligand>
</feature>
<feature type="binding site" evidence="1">
    <location>
        <position position="319"/>
    </location>
    <ligand>
        <name>FMN</name>
        <dbReference type="ChEBI" id="CHEBI:58210"/>
    </ligand>
</feature>
<evidence type="ECO:0000255" key="1">
    <source>
        <dbReference type="HAMAP-Rule" id="MF_00300"/>
    </source>
</evidence>
<gene>
    <name evidence="1" type="primary">aroC</name>
    <name type="ordered locus">SNSL254_A2573</name>
</gene>
<proteinExistence type="inferred from homology"/>
<dbReference type="EC" id="4.2.3.5" evidence="1"/>
<dbReference type="EMBL" id="CP001113">
    <property type="protein sequence ID" value="ACF63709.1"/>
    <property type="molecule type" value="Genomic_DNA"/>
</dbReference>
<dbReference type="RefSeq" id="WP_000918456.1">
    <property type="nucleotide sequence ID" value="NZ_CCMR01000001.1"/>
</dbReference>
<dbReference type="SMR" id="B4SZQ7"/>
<dbReference type="KEGG" id="see:SNSL254_A2573"/>
<dbReference type="HOGENOM" id="CLU_034547_0_2_6"/>
<dbReference type="UniPathway" id="UPA00053">
    <property type="reaction ID" value="UER00090"/>
</dbReference>
<dbReference type="Proteomes" id="UP000008824">
    <property type="component" value="Chromosome"/>
</dbReference>
<dbReference type="GO" id="GO:0005829">
    <property type="term" value="C:cytosol"/>
    <property type="evidence" value="ECO:0007669"/>
    <property type="project" value="TreeGrafter"/>
</dbReference>
<dbReference type="GO" id="GO:0004107">
    <property type="term" value="F:chorismate synthase activity"/>
    <property type="evidence" value="ECO:0007669"/>
    <property type="project" value="UniProtKB-UniRule"/>
</dbReference>
<dbReference type="GO" id="GO:0010181">
    <property type="term" value="F:FMN binding"/>
    <property type="evidence" value="ECO:0007669"/>
    <property type="project" value="TreeGrafter"/>
</dbReference>
<dbReference type="GO" id="GO:0008652">
    <property type="term" value="P:amino acid biosynthetic process"/>
    <property type="evidence" value="ECO:0007669"/>
    <property type="project" value="UniProtKB-KW"/>
</dbReference>
<dbReference type="GO" id="GO:0009073">
    <property type="term" value="P:aromatic amino acid family biosynthetic process"/>
    <property type="evidence" value="ECO:0007669"/>
    <property type="project" value="UniProtKB-KW"/>
</dbReference>
<dbReference type="GO" id="GO:0009423">
    <property type="term" value="P:chorismate biosynthetic process"/>
    <property type="evidence" value="ECO:0007669"/>
    <property type="project" value="UniProtKB-UniRule"/>
</dbReference>
<dbReference type="CDD" id="cd07304">
    <property type="entry name" value="Chorismate_synthase"/>
    <property type="match status" value="1"/>
</dbReference>
<dbReference type="FunFam" id="3.60.150.10:FF:000001">
    <property type="entry name" value="Chorismate synthase"/>
    <property type="match status" value="1"/>
</dbReference>
<dbReference type="Gene3D" id="3.60.150.10">
    <property type="entry name" value="Chorismate synthase AroC"/>
    <property type="match status" value="1"/>
</dbReference>
<dbReference type="HAMAP" id="MF_00300">
    <property type="entry name" value="Chorismate_synth"/>
    <property type="match status" value="1"/>
</dbReference>
<dbReference type="InterPro" id="IPR000453">
    <property type="entry name" value="Chorismate_synth"/>
</dbReference>
<dbReference type="InterPro" id="IPR035904">
    <property type="entry name" value="Chorismate_synth_AroC_sf"/>
</dbReference>
<dbReference type="InterPro" id="IPR020541">
    <property type="entry name" value="Chorismate_synthase_CS"/>
</dbReference>
<dbReference type="NCBIfam" id="TIGR00033">
    <property type="entry name" value="aroC"/>
    <property type="match status" value="1"/>
</dbReference>
<dbReference type="NCBIfam" id="NF003793">
    <property type="entry name" value="PRK05382.1"/>
    <property type="match status" value="1"/>
</dbReference>
<dbReference type="PANTHER" id="PTHR21085">
    <property type="entry name" value="CHORISMATE SYNTHASE"/>
    <property type="match status" value="1"/>
</dbReference>
<dbReference type="PANTHER" id="PTHR21085:SF0">
    <property type="entry name" value="CHORISMATE SYNTHASE"/>
    <property type="match status" value="1"/>
</dbReference>
<dbReference type="Pfam" id="PF01264">
    <property type="entry name" value="Chorismate_synt"/>
    <property type="match status" value="1"/>
</dbReference>
<dbReference type="PIRSF" id="PIRSF001456">
    <property type="entry name" value="Chorismate_synth"/>
    <property type="match status" value="1"/>
</dbReference>
<dbReference type="SUPFAM" id="SSF103263">
    <property type="entry name" value="Chorismate synthase, AroC"/>
    <property type="match status" value="1"/>
</dbReference>
<dbReference type="PROSITE" id="PS00787">
    <property type="entry name" value="CHORISMATE_SYNTHASE_1"/>
    <property type="match status" value="1"/>
</dbReference>
<dbReference type="PROSITE" id="PS00788">
    <property type="entry name" value="CHORISMATE_SYNTHASE_2"/>
    <property type="match status" value="1"/>
</dbReference>
<dbReference type="PROSITE" id="PS00789">
    <property type="entry name" value="CHORISMATE_SYNTHASE_3"/>
    <property type="match status" value="1"/>
</dbReference>
<organism>
    <name type="scientific">Salmonella newport (strain SL254)</name>
    <dbReference type="NCBI Taxonomy" id="423368"/>
    <lineage>
        <taxon>Bacteria</taxon>
        <taxon>Pseudomonadati</taxon>
        <taxon>Pseudomonadota</taxon>
        <taxon>Gammaproteobacteria</taxon>
        <taxon>Enterobacterales</taxon>
        <taxon>Enterobacteriaceae</taxon>
        <taxon>Salmonella</taxon>
    </lineage>
</organism>
<protein>
    <recommendedName>
        <fullName evidence="1">Chorismate synthase</fullName>
        <shortName evidence="1">CS</shortName>
        <ecNumber evidence="1">4.2.3.5</ecNumber>
    </recommendedName>
    <alternativeName>
        <fullName evidence="1">5-enolpyruvylshikimate-3-phosphate phospholyase</fullName>
    </alternativeName>
</protein>